<comment type="function">
    <text evidence="6 8 9 10">Regulates dense-core vesicle (DCV) trafficking and/or secretion (PubMed:19343207). Probably by controlling DCV trafficking, plays a role in the AVG neuron-mediated formation of the right axon tract of the ventral nerve cord (PubMed:27116976). Involved in locomotion by regulating acetylcholine release (PubMed:15044551). Probably by controlling the secretion of FLP neuropeptides, regulates the turning step of male mating behavior (PubMed:17611271). Plays a role in preventing dauer formation (PubMed:15044551).</text>
</comment>
<comment type="subcellular location">
    <subcellularLocation>
        <location evidence="7 15">Cytoplasmic vesicle membrane</location>
        <topology evidence="14">Single-pass type I membrane protein</topology>
    </subcellularLocation>
    <subcellularLocation>
        <location evidence="6 7">Perikaryon</location>
    </subcellularLocation>
    <subcellularLocation>
        <location evidence="6 7">Cell projection</location>
        <location evidence="6 7">Axon</location>
    </subcellularLocation>
    <subcellularLocation>
        <location evidence="7">Cell projection</location>
        <location evidence="7">Dendrite</location>
    </subcellularLocation>
    <text evidence="6 7">Localizes to dense-core vesicles along axons.</text>
</comment>
<comment type="tissue specificity">
    <text evidence="4 5 6 7 9">In hermaphrodites specifically expressed in neurons and in particular in the head nerve ring (ADE, ALA, ASI, ASK, AUA, ASG, AVH and AVJ neurons), in the ventral nerve cord, pre-anal ganglia (PVP neuron), in the tail (PHA, PHB and PHC neurons) and in vulval motor neurons VC and HSN and the vulval uv1 cells (PubMed:11086294, PubMed:11206415, PubMed:15044551, PubMed:15180830, PubMed:19343207). In males, also expressed in neurons anterior to the nerve ring and male-specific neurons in the tail (PubMed:11086294, PubMed:15180830).</text>
</comment>
<comment type="developmental stage">
    <text evidence="4">Expressed at all stages including the dauer stage. Expression in the ventral cord and near the vulva starts at the L4 larval stage.</text>
</comment>
<comment type="PTM">
    <text evidence="7">Proteolytically cleaved probably at a dibasic consensus sequence by egl-3.</text>
</comment>
<comment type="disruption phenotype">
    <text evidence="6 8 9 10">Viable and fertile with a reduced brood size (PubMed:15044551, PubMed:19343207). Locomotion is slightly slower and the expulsion step of the defecation cycle is often missing (PubMed:15044551). In males, impaired mating turning behavior characterized by abnormal repetitive turning during the first turn (PubMed:17611271). 50 percent reduction in dense-core vesicles in ventral cord neurons (PubMed:19343207). Paralysis induced by acetylcholinesterase inhibitor aldicarb is reduced in 50 percent of mutants (PubMed:15044551). Resistant to aldicarb-induced reduction in brood size (PubMed:19343207). In a unc-64 (e246) mutant background increases dauer formation whereas in a unc-31 (e169) abolishes dauer formation (PubMed:15044551). In a daf-2 (e1370) or daf-28 (sa191) mutant background increases dauer formation (PubMed:15044551). In a nid-1 (cg119) mutant background, abnormal cross-over of the AVG neuron axon during the formation of the right axon tract of the ventral nerve cord (PubMed:27116976).</text>
</comment>
<comment type="similarity">
    <text evidence="14">Belongs to the protein-tyrosine phosphatase family. Receptor class 8 subfamily.</text>
</comment>
<comment type="caution">
    <text evidence="14">Lacks the typical Cys active site in position 696 that is replaced by a Ser residue, preventing the tyrosine-protein phosphatase activity.</text>
</comment>
<dbReference type="EMBL" id="AF126740">
    <property type="protein sequence ID" value="AAK14908.1"/>
    <property type="molecule type" value="mRNA"/>
</dbReference>
<dbReference type="EMBL" id="AJ245560">
    <property type="protein sequence ID" value="CAB52188.1"/>
    <property type="molecule type" value="mRNA"/>
</dbReference>
<dbReference type="EMBL" id="BX284603">
    <property type="protein sequence ID" value="CCD61500.1"/>
    <property type="molecule type" value="Genomic_DNA"/>
</dbReference>
<dbReference type="RefSeq" id="NP_498245.2">
    <property type="nucleotide sequence ID" value="NM_065844.5"/>
</dbReference>
<dbReference type="SMR" id="G5EGJ5"/>
<dbReference type="FunCoup" id="G5EGJ5">
    <property type="interactions" value="3"/>
</dbReference>
<dbReference type="STRING" id="6239.B0244.2.1"/>
<dbReference type="GlyCosmos" id="G5EGJ5">
    <property type="glycosylation" value="2 sites, No reported glycans"/>
</dbReference>
<dbReference type="PaxDb" id="6239-B0244.2"/>
<dbReference type="PeptideAtlas" id="G5EGJ5"/>
<dbReference type="EnsemblMetazoa" id="B0244.2.1">
    <property type="protein sequence ID" value="B0244.2.1"/>
    <property type="gene ID" value="WBGene00002048"/>
</dbReference>
<dbReference type="GeneID" id="175807"/>
<dbReference type="KEGG" id="cel:CELE_B0244.2"/>
<dbReference type="AGR" id="WB:WBGene00002048"/>
<dbReference type="CTD" id="175807"/>
<dbReference type="WormBase" id="B0244.2">
    <property type="protein sequence ID" value="CE31867"/>
    <property type="gene ID" value="WBGene00002048"/>
    <property type="gene designation" value="ida-1"/>
</dbReference>
<dbReference type="eggNOG" id="KOG0793">
    <property type="taxonomic scope" value="Eukaryota"/>
</dbReference>
<dbReference type="GeneTree" id="ENSGT00940000169984"/>
<dbReference type="HOGENOM" id="CLU_383214_0_0_1"/>
<dbReference type="InParanoid" id="G5EGJ5"/>
<dbReference type="OMA" id="AFWQTIW"/>
<dbReference type="OrthoDB" id="9880441at2759"/>
<dbReference type="PhylomeDB" id="G5EGJ5"/>
<dbReference type="Reactome" id="R-CEL-6798695">
    <property type="pathway name" value="Neutrophil degranulation"/>
</dbReference>
<dbReference type="PRO" id="PR:G5EGJ5"/>
<dbReference type="Proteomes" id="UP000001940">
    <property type="component" value="Chromosome III"/>
</dbReference>
<dbReference type="Bgee" id="WBGene00002048">
    <property type="expression patterns" value="Expressed in larva and 4 other cell types or tissues"/>
</dbReference>
<dbReference type="GO" id="GO:0030424">
    <property type="term" value="C:axon"/>
    <property type="evidence" value="ECO:0007669"/>
    <property type="project" value="UniProtKB-SubCell"/>
</dbReference>
<dbReference type="GO" id="GO:0030659">
    <property type="term" value="C:cytoplasmic vesicle membrane"/>
    <property type="evidence" value="ECO:0007669"/>
    <property type="project" value="UniProtKB-SubCell"/>
</dbReference>
<dbReference type="GO" id="GO:0030425">
    <property type="term" value="C:dendrite"/>
    <property type="evidence" value="ECO:0007669"/>
    <property type="project" value="UniProtKB-SubCell"/>
</dbReference>
<dbReference type="GO" id="GO:0031045">
    <property type="term" value="C:dense core granule"/>
    <property type="evidence" value="ECO:0000314"/>
    <property type="project" value="WormBase"/>
</dbReference>
<dbReference type="GO" id="GO:0043204">
    <property type="term" value="C:perikaryon"/>
    <property type="evidence" value="ECO:0007669"/>
    <property type="project" value="UniProtKB-SubCell"/>
</dbReference>
<dbReference type="GO" id="GO:0030141">
    <property type="term" value="C:secretory granule"/>
    <property type="evidence" value="ECO:0000318"/>
    <property type="project" value="GO_Central"/>
</dbReference>
<dbReference type="GO" id="GO:0045202">
    <property type="term" value="C:synapse"/>
    <property type="evidence" value="ECO:0000314"/>
    <property type="project" value="WormBase"/>
</dbReference>
<dbReference type="GO" id="GO:0030140">
    <property type="term" value="C:trans-Golgi network transport vesicle"/>
    <property type="evidence" value="ECO:0000304"/>
    <property type="project" value="WormBase"/>
</dbReference>
<dbReference type="GO" id="GO:0005001">
    <property type="term" value="F:transmembrane receptor protein tyrosine phosphatase activity"/>
    <property type="evidence" value="ECO:0000250"/>
    <property type="project" value="WormBase"/>
</dbReference>
<dbReference type="GO" id="GO:0006887">
    <property type="term" value="P:exocytosis"/>
    <property type="evidence" value="ECO:0000304"/>
    <property type="project" value="WormBase"/>
</dbReference>
<dbReference type="GO" id="GO:1905488">
    <property type="term" value="P:positive regulation of anterior/posterior axon guidance"/>
    <property type="evidence" value="ECO:0000316"/>
    <property type="project" value="UniProtKB"/>
</dbReference>
<dbReference type="GO" id="GO:0001956">
    <property type="term" value="P:positive regulation of neurotransmitter secretion"/>
    <property type="evidence" value="ECO:0000315"/>
    <property type="project" value="WormBase"/>
</dbReference>
<dbReference type="GO" id="GO:0051046">
    <property type="term" value="P:regulation of secretion"/>
    <property type="evidence" value="ECO:0000318"/>
    <property type="project" value="GO_Central"/>
</dbReference>
<dbReference type="GO" id="GO:0007419">
    <property type="term" value="P:ventral cord development"/>
    <property type="evidence" value="ECO:0000316"/>
    <property type="project" value="UniProtKB"/>
</dbReference>
<dbReference type="CDD" id="cd14546">
    <property type="entry name" value="R-PTP-N-N2"/>
    <property type="match status" value="1"/>
</dbReference>
<dbReference type="FunFam" id="3.90.190.10:FF:000017">
    <property type="entry name" value="receptor-type tyrosine-protein phosphatase-like N isoform X2"/>
    <property type="match status" value="1"/>
</dbReference>
<dbReference type="Gene3D" id="3.90.190.10">
    <property type="entry name" value="Protein tyrosine phosphatase superfamily"/>
    <property type="match status" value="1"/>
</dbReference>
<dbReference type="InterPro" id="IPR033522">
    <property type="entry name" value="IA-2/IA-2_beta"/>
</dbReference>
<dbReference type="InterPro" id="IPR029021">
    <property type="entry name" value="Prot-tyrosine_phosphatase-like"/>
</dbReference>
<dbReference type="InterPro" id="IPR000242">
    <property type="entry name" value="PTP_cat"/>
</dbReference>
<dbReference type="InterPro" id="IPR003595">
    <property type="entry name" value="Tyr_Pase_cat"/>
</dbReference>
<dbReference type="InterPro" id="IPR000387">
    <property type="entry name" value="Tyr_Pase_dom"/>
</dbReference>
<dbReference type="PANTHER" id="PTHR46106">
    <property type="entry name" value="IA-2 PROTEIN TYROSINE PHOSPHATASE, ISOFORM C"/>
    <property type="match status" value="1"/>
</dbReference>
<dbReference type="PANTHER" id="PTHR46106:SF4">
    <property type="entry name" value="IA-2 PROTEIN TYROSINE PHOSPHATASE, ISOFORM C"/>
    <property type="match status" value="1"/>
</dbReference>
<dbReference type="Pfam" id="PF00102">
    <property type="entry name" value="Y_phosphatase"/>
    <property type="match status" value="1"/>
</dbReference>
<dbReference type="PRINTS" id="PR00700">
    <property type="entry name" value="PRTYPHPHTASE"/>
</dbReference>
<dbReference type="SMART" id="SM00194">
    <property type="entry name" value="PTPc"/>
    <property type="match status" value="1"/>
</dbReference>
<dbReference type="SMART" id="SM00404">
    <property type="entry name" value="PTPc_motif"/>
    <property type="match status" value="1"/>
</dbReference>
<dbReference type="SUPFAM" id="SSF52799">
    <property type="entry name" value="(Phosphotyrosine protein) phosphatases II"/>
    <property type="match status" value="1"/>
</dbReference>
<dbReference type="PROSITE" id="PS50056">
    <property type="entry name" value="TYR_PHOSPHATASE_2"/>
    <property type="match status" value="1"/>
</dbReference>
<dbReference type="PROSITE" id="PS50055">
    <property type="entry name" value="TYR_PHOSPHATASE_PTP"/>
    <property type="match status" value="1"/>
</dbReference>
<gene>
    <name evidence="11 19" type="primary">ida-1</name>
    <name evidence="12" type="synonym">ia2</name>
    <name evidence="19" type="ORF">B0244.2</name>
</gene>
<evidence type="ECO:0000255" key="1"/>
<evidence type="ECO:0000255" key="2">
    <source>
        <dbReference type="PROSITE-ProRule" id="PRU00160"/>
    </source>
</evidence>
<evidence type="ECO:0000255" key="3">
    <source>
        <dbReference type="PROSITE-ProRule" id="PRU00498"/>
    </source>
</evidence>
<evidence type="ECO:0000269" key="4">
    <source>
    </source>
</evidence>
<evidence type="ECO:0000269" key="5">
    <source>
    </source>
</evidence>
<evidence type="ECO:0000269" key="6">
    <source>
    </source>
</evidence>
<evidence type="ECO:0000269" key="7">
    <source>
    </source>
</evidence>
<evidence type="ECO:0000269" key="8">
    <source>
    </source>
</evidence>
<evidence type="ECO:0000269" key="9">
    <source>
    </source>
</evidence>
<evidence type="ECO:0000269" key="10">
    <source>
    </source>
</evidence>
<evidence type="ECO:0000303" key="11">
    <source>
    </source>
</evidence>
<evidence type="ECO:0000303" key="12">
    <source>
    </source>
</evidence>
<evidence type="ECO:0000303" key="13">
    <source>
    </source>
</evidence>
<evidence type="ECO:0000305" key="14"/>
<evidence type="ECO:0000305" key="15">
    <source>
    </source>
</evidence>
<evidence type="ECO:0000312" key="16">
    <source>
        <dbReference type="EMBL" id="AAK14908.1"/>
    </source>
</evidence>
<evidence type="ECO:0000312" key="17">
    <source>
        <dbReference type="EMBL" id="CAB52188.1"/>
    </source>
</evidence>
<evidence type="ECO:0000312" key="18">
    <source>
        <dbReference type="Proteomes" id="UP000001940"/>
    </source>
</evidence>
<evidence type="ECO:0000312" key="19">
    <source>
        <dbReference type="WormBase" id="B0244.2"/>
    </source>
</evidence>
<organism evidence="18">
    <name type="scientific">Caenorhabditis elegans</name>
    <dbReference type="NCBI Taxonomy" id="6239"/>
    <lineage>
        <taxon>Eukaryota</taxon>
        <taxon>Metazoa</taxon>
        <taxon>Ecdysozoa</taxon>
        <taxon>Nematoda</taxon>
        <taxon>Chromadorea</taxon>
        <taxon>Rhabditida</taxon>
        <taxon>Rhabditina</taxon>
        <taxon>Rhabditomorpha</taxon>
        <taxon>Rhabditoidea</taxon>
        <taxon>Rhabditidae</taxon>
        <taxon>Peloderinae</taxon>
        <taxon>Caenorhabditis</taxon>
    </lineage>
</organism>
<sequence>MRFFHSIIVLLFSISTGSAFLLYGCNLSENLCDNDESCYPDGVFGQCYSSESGSPEPTVLDNLDDTQLELLKLELTRLAAKDKDWGDEETQCVLAYFKMSMFYQLQYDPDFCQVRKPANVWALIQLIDTGLTEDPTILDEDVNPENVTDEDMAQIIEQLKEPSLPTEEDIEEALNAQNEDVDDEILDQYVQAVVNNENPDFSELSDGQLNILIGRLVDLKKNVENEEAQLLTGDGEQEMAVPLDDLEERGEQAILKKDIEQVGEINQGLDNTEHKIVKGRKDQVVTRVDANRVYLKVHLKNEDQLMPLIEFLQNTIAIPNNLYFDDFQFENGQLSMRISRFEGAKPKADKRIDSVEGVASAVYKRRKDIARLSGADVRETGIGSGEDGSLPVESSERDWLLMPVLFVCAFTVTALGLVAAVQIARSRRHYKDNIQQIAEQLDGKNSFAYQDLCRQRADGGRASKSSSTSSWCEETAVPTIDISTGHVVLNFLQEYLSEPTKIEAQWNGIKDYRNEERTKTKAEKFASQNRTILPFDDNIVDIDGKTAENEDFYLNASFIYDDDPRQAVYIAAQTPASSQIAAFWQTIWQHGVCLVVNLSTPEECKQEKNYWPDTGSEVHGAFEIHLVSEHIWSDDYLVRSFYLKNLQNSQTRTITQFHYLSWQKESTPTSAKSILEFRRKVNKSYRGRSSAVLVHSWDGSGRTGVYCAVDVLCARLLRGIRQIDVVATVEHLRDQRDGMVATGDQFKLVYGCVAQEVNHLLKSIATK</sequence>
<keyword id="KW-0966">Cell projection</keyword>
<keyword id="KW-0165">Cleavage on pair of basic residues</keyword>
<keyword id="KW-0968">Cytoplasmic vesicle</keyword>
<keyword id="KW-0325">Glycoprotein</keyword>
<keyword id="KW-0472">Membrane</keyword>
<keyword id="KW-1185">Reference proteome</keyword>
<keyword id="KW-0732">Signal</keyword>
<keyword id="KW-0812">Transmembrane</keyword>
<keyword id="KW-1133">Transmembrane helix</keyword>
<keyword id="KW-0813">Transport</keyword>
<feature type="signal peptide" evidence="1">
    <location>
        <begin position="1"/>
        <end position="19"/>
    </location>
</feature>
<feature type="chain" id="PRO_5011414590" description="Receptor-type tyrosine-protein phosphatase-like ida-1" evidence="1">
    <location>
        <begin position="20"/>
        <end position="767"/>
    </location>
</feature>
<feature type="topological domain" description="Lumenal" evidence="14">
    <location>
        <begin position="20"/>
        <end position="398"/>
    </location>
</feature>
<feature type="transmembrane region" description="Helical" evidence="1">
    <location>
        <begin position="399"/>
        <end position="419"/>
    </location>
</feature>
<feature type="topological domain" description="Cytoplasmic" evidence="14">
    <location>
        <begin position="420"/>
        <end position="767"/>
    </location>
</feature>
<feature type="domain" description="Tyrosine-protein phosphatase" evidence="2">
    <location>
        <begin position="527"/>
        <end position="756"/>
    </location>
</feature>
<feature type="glycosylation site" description="N-linked (GlcNAc...) asparagine" evidence="3">
    <location>
        <position position="26"/>
    </location>
</feature>
<feature type="glycosylation site" description="N-linked (GlcNAc...) asparagine" evidence="3">
    <location>
        <position position="146"/>
    </location>
</feature>
<name>IDA1_CAEEL</name>
<protein>
    <recommendedName>
        <fullName evidence="14">Receptor-type tyrosine-protein phosphatase-like ida-1</fullName>
    </recommendedName>
    <alternativeName>
        <fullName evidence="13">Dense-core vesicle membrane protein ida-1</fullName>
    </alternativeName>
    <alternativeName>
        <fullName evidence="11">Related to islet cell diabetic autoantigen protein</fullName>
    </alternativeName>
</protein>
<accession>G5EGJ5</accession>
<proteinExistence type="evidence at protein level"/>
<reference evidence="16" key="1">
    <citation type="journal article" date="2001" name="Diabetologia">
        <title>The IA-2 gene family: homologs in Caenorhabditis elegans, Drosophila and zebrafish.</title>
        <authorList>
            <person name="Cai T."/>
            <person name="Krause M.W."/>
            <person name="Odenwald W.F."/>
            <person name="Toyama R."/>
            <person name="Notkins A.L."/>
        </authorList>
    </citation>
    <scope>NUCLEOTIDE SEQUENCE [MRNA]</scope>
    <scope>TISSUE SPECIFICITY</scope>
</reference>
<reference evidence="17" key="2">
    <citation type="journal article" date="2001" name="J. Comp. Neurol.">
        <title>IDA-1, a Caenorhabditis elegans homolog of the diabetic autoantigens IA-2 and phogrin, is expressed in peptidergic neurons in the worm.</title>
        <authorList>
            <person name="Zahn T."/>
            <person name="MacMorris M.A."/>
            <person name="Dong W."/>
            <person name="Day R."/>
            <person name="Hutton J.C."/>
        </authorList>
    </citation>
    <scope>NUCLEOTIDE SEQUENCE [MRNA]</scope>
    <scope>TISSUE SPECIFICITY</scope>
    <scope>DEVELOPMENTAL STAGE</scope>
</reference>
<reference evidence="18" key="3">
    <citation type="journal article" date="1998" name="Science">
        <title>Genome sequence of the nematode C. elegans: a platform for investigating biology.</title>
        <authorList>
            <consortium name="The C. elegans sequencing consortium"/>
        </authorList>
    </citation>
    <scope>NUCLEOTIDE SEQUENCE [LARGE SCALE GENOMIC DNA]</scope>
    <source>
        <strain evidence="18">Bristol N2</strain>
    </source>
</reference>
<reference evidence="14" key="4">
    <citation type="journal article" date="2004" name="J. Neurosci.">
        <title>Insulinoma-Associated Protein IA-2, a Vesicle Transmembrane Protein, Genetically Interacts with UNC-31/CAPS and Affects Neurosecretion in Caenorhabditis elegans.</title>
        <authorList>
            <person name="Cai T."/>
            <person name="Fukushige T."/>
            <person name="Notkins A.L."/>
            <person name="Krause M."/>
        </authorList>
    </citation>
    <scope>FUNCTION</scope>
    <scope>SUBCELLULAR LOCATION</scope>
    <scope>TISSUE SPECIFICITY</scope>
</reference>
<reference evidence="14" key="5">
    <citation type="journal article" date="2004" name="Traffic">
        <title>Dense core vesicle dynamics in Caenorhabditis elegans neurons and the role of kinesin UNC-104.</title>
        <authorList>
            <person name="Zahn T.R."/>
            <person name="Angleson J.K."/>
            <person name="MacMorris M.A."/>
            <person name="Domke E."/>
            <person name="Hutton J.F."/>
            <person name="Schwartz C."/>
            <person name="Hutton J.C."/>
        </authorList>
    </citation>
    <scope>SUBCELLULAR LOCATION</scope>
    <scope>TISSUE SPECIFICITY</scope>
    <scope>PROTEOLYTIC CLEAVAGE</scope>
</reference>
<reference evidence="14" key="6">
    <citation type="journal article" date="2007" name="J. Neurosci.">
        <title>FMRFamide-like neuropeptides and mechanosensory touch receptor neurons regulate male sexual turning behavior in Caenorhabditis elegans.</title>
        <authorList>
            <person name="Liu T."/>
            <person name="Kim K."/>
            <person name="Li C."/>
            <person name="Barr M.M."/>
        </authorList>
    </citation>
    <scope>FUNCTION</scope>
    <scope>DISRUPTION PHENOTYPE</scope>
</reference>
<reference evidence="14" key="7">
    <citation type="journal article" date="2009" name="PLoS Genet.">
        <title>Loss of the transcriptional repressor PAG-3/Gfi-1 results in enhanced neurosecretion that is dependent on the dense-core vesicle membrane protein IDA-1/IA-2.</title>
        <authorList>
            <person name="Cai T."/>
            <person name="Hirai H."/>
            <person name="Fukushige T."/>
            <person name="Yu P."/>
            <person name="Zhang G."/>
            <person name="Notkins A.L."/>
            <person name="Krause M."/>
        </authorList>
    </citation>
    <scope>FUNCTION</scope>
    <scope>TISSUE SPECIFICITY</scope>
    <scope>DISRUPTION PHENOTYPE</scope>
</reference>
<reference evidence="14" key="8">
    <citation type="journal article" date="2016" name="Genetics">
        <title>Pioneer Axon Navigation Is Controlled by AEX-3, a Guanine Nucleotide Exchange Factor for RAB-3 in Caenorhabditis elegans.</title>
        <authorList>
            <person name="Bhat J.M."/>
            <person name="Hutter H."/>
        </authorList>
    </citation>
    <scope>FUNCTION</scope>
    <scope>DISRUPTION PHENOTYPE</scope>
</reference>